<organism>
    <name type="scientific">Arabidopsis thaliana</name>
    <name type="common">Mouse-ear cress</name>
    <dbReference type="NCBI Taxonomy" id="3702"/>
    <lineage>
        <taxon>Eukaryota</taxon>
        <taxon>Viridiplantae</taxon>
        <taxon>Streptophyta</taxon>
        <taxon>Embryophyta</taxon>
        <taxon>Tracheophyta</taxon>
        <taxon>Spermatophyta</taxon>
        <taxon>Magnoliopsida</taxon>
        <taxon>eudicotyledons</taxon>
        <taxon>Gunneridae</taxon>
        <taxon>Pentapetalae</taxon>
        <taxon>rosids</taxon>
        <taxon>malvids</taxon>
        <taxon>Brassicales</taxon>
        <taxon>Brassicaceae</taxon>
        <taxon>Camelineae</taxon>
        <taxon>Arabidopsis</taxon>
    </lineage>
</organism>
<reference key="1">
    <citation type="journal article" date="2000" name="Nature">
        <title>Sequence and analysis of chromosome 1 of the plant Arabidopsis thaliana.</title>
        <authorList>
            <person name="Theologis A."/>
            <person name="Ecker J.R."/>
            <person name="Palm C.J."/>
            <person name="Federspiel N.A."/>
            <person name="Kaul S."/>
            <person name="White O."/>
            <person name="Alonso J."/>
            <person name="Altafi H."/>
            <person name="Araujo R."/>
            <person name="Bowman C.L."/>
            <person name="Brooks S.Y."/>
            <person name="Buehler E."/>
            <person name="Chan A."/>
            <person name="Chao Q."/>
            <person name="Chen H."/>
            <person name="Cheuk R.F."/>
            <person name="Chin C.W."/>
            <person name="Chung M.K."/>
            <person name="Conn L."/>
            <person name="Conway A.B."/>
            <person name="Conway A.R."/>
            <person name="Creasy T.H."/>
            <person name="Dewar K."/>
            <person name="Dunn P."/>
            <person name="Etgu P."/>
            <person name="Feldblyum T.V."/>
            <person name="Feng J.-D."/>
            <person name="Fong B."/>
            <person name="Fujii C.Y."/>
            <person name="Gill J.E."/>
            <person name="Goldsmith A.D."/>
            <person name="Haas B."/>
            <person name="Hansen N.F."/>
            <person name="Hughes B."/>
            <person name="Huizar L."/>
            <person name="Hunter J.L."/>
            <person name="Jenkins J."/>
            <person name="Johnson-Hopson C."/>
            <person name="Khan S."/>
            <person name="Khaykin E."/>
            <person name="Kim C.J."/>
            <person name="Koo H.L."/>
            <person name="Kremenetskaia I."/>
            <person name="Kurtz D.B."/>
            <person name="Kwan A."/>
            <person name="Lam B."/>
            <person name="Langin-Hooper S."/>
            <person name="Lee A."/>
            <person name="Lee J.M."/>
            <person name="Lenz C.A."/>
            <person name="Li J.H."/>
            <person name="Li Y.-P."/>
            <person name="Lin X."/>
            <person name="Liu S.X."/>
            <person name="Liu Z.A."/>
            <person name="Luros J.S."/>
            <person name="Maiti R."/>
            <person name="Marziali A."/>
            <person name="Militscher J."/>
            <person name="Miranda M."/>
            <person name="Nguyen M."/>
            <person name="Nierman W.C."/>
            <person name="Osborne B.I."/>
            <person name="Pai G."/>
            <person name="Peterson J."/>
            <person name="Pham P.K."/>
            <person name="Rizzo M."/>
            <person name="Rooney T."/>
            <person name="Rowley D."/>
            <person name="Sakano H."/>
            <person name="Salzberg S.L."/>
            <person name="Schwartz J.R."/>
            <person name="Shinn P."/>
            <person name="Southwick A.M."/>
            <person name="Sun H."/>
            <person name="Tallon L.J."/>
            <person name="Tambunga G."/>
            <person name="Toriumi M.J."/>
            <person name="Town C.D."/>
            <person name="Utterback T."/>
            <person name="Van Aken S."/>
            <person name="Vaysberg M."/>
            <person name="Vysotskaia V.S."/>
            <person name="Walker M."/>
            <person name="Wu D."/>
            <person name="Yu G."/>
            <person name="Fraser C.M."/>
            <person name="Venter J.C."/>
            <person name="Davis R.W."/>
        </authorList>
    </citation>
    <scope>NUCLEOTIDE SEQUENCE [LARGE SCALE GENOMIC DNA]</scope>
    <source>
        <strain>cv. Columbia</strain>
    </source>
</reference>
<reference key="2">
    <citation type="journal article" date="2017" name="Plant J.">
        <title>Araport11: a complete reannotation of the Arabidopsis thaliana reference genome.</title>
        <authorList>
            <person name="Cheng C.Y."/>
            <person name="Krishnakumar V."/>
            <person name="Chan A.P."/>
            <person name="Thibaud-Nissen F."/>
            <person name="Schobel S."/>
            <person name="Town C.D."/>
        </authorList>
    </citation>
    <scope>GENOME REANNOTATION</scope>
    <source>
        <strain>cv. Columbia</strain>
    </source>
</reference>
<reference key="3">
    <citation type="journal article" date="2002" name="Science">
        <title>Functional annotation of a full-length Arabidopsis cDNA collection.</title>
        <authorList>
            <person name="Seki M."/>
            <person name="Narusaka M."/>
            <person name="Kamiya A."/>
            <person name="Ishida J."/>
            <person name="Satou M."/>
            <person name="Sakurai T."/>
            <person name="Nakajima M."/>
            <person name="Enju A."/>
            <person name="Akiyama K."/>
            <person name="Oono Y."/>
            <person name="Muramatsu M."/>
            <person name="Hayashizaki Y."/>
            <person name="Kawai J."/>
            <person name="Carninci P."/>
            <person name="Itoh M."/>
            <person name="Ishii Y."/>
            <person name="Arakawa T."/>
            <person name="Shibata K."/>
            <person name="Shinagawa A."/>
            <person name="Shinozaki K."/>
        </authorList>
    </citation>
    <scope>NUCLEOTIDE SEQUENCE [LARGE SCALE MRNA]</scope>
    <source>
        <strain>cv. Columbia</strain>
    </source>
</reference>
<reference key="4">
    <citation type="journal article" date="2003" name="Science">
        <title>Empirical analysis of transcriptional activity in the Arabidopsis genome.</title>
        <authorList>
            <person name="Yamada K."/>
            <person name="Lim J."/>
            <person name="Dale J.M."/>
            <person name="Chen H."/>
            <person name="Shinn P."/>
            <person name="Palm C.J."/>
            <person name="Southwick A.M."/>
            <person name="Wu H.C."/>
            <person name="Kim C.J."/>
            <person name="Nguyen M."/>
            <person name="Pham P.K."/>
            <person name="Cheuk R.F."/>
            <person name="Karlin-Newmann G."/>
            <person name="Liu S.X."/>
            <person name="Lam B."/>
            <person name="Sakano H."/>
            <person name="Wu T."/>
            <person name="Yu G."/>
            <person name="Miranda M."/>
            <person name="Quach H.L."/>
            <person name="Tripp M."/>
            <person name="Chang C.H."/>
            <person name="Lee J.M."/>
            <person name="Toriumi M.J."/>
            <person name="Chan M.M."/>
            <person name="Tang C.C."/>
            <person name="Onodera C.S."/>
            <person name="Deng J.M."/>
            <person name="Akiyama K."/>
            <person name="Ansari Y."/>
            <person name="Arakawa T."/>
            <person name="Banh J."/>
            <person name="Banno F."/>
            <person name="Bowser L."/>
            <person name="Brooks S.Y."/>
            <person name="Carninci P."/>
            <person name="Chao Q."/>
            <person name="Choy N."/>
            <person name="Enju A."/>
            <person name="Goldsmith A.D."/>
            <person name="Gurjal M."/>
            <person name="Hansen N.F."/>
            <person name="Hayashizaki Y."/>
            <person name="Johnson-Hopson C."/>
            <person name="Hsuan V.W."/>
            <person name="Iida K."/>
            <person name="Karnes M."/>
            <person name="Khan S."/>
            <person name="Koesema E."/>
            <person name="Ishida J."/>
            <person name="Jiang P.X."/>
            <person name="Jones T."/>
            <person name="Kawai J."/>
            <person name="Kamiya A."/>
            <person name="Meyers C."/>
            <person name="Nakajima M."/>
            <person name="Narusaka M."/>
            <person name="Seki M."/>
            <person name="Sakurai T."/>
            <person name="Satou M."/>
            <person name="Tamse R."/>
            <person name="Vaysberg M."/>
            <person name="Wallender E.K."/>
            <person name="Wong C."/>
            <person name="Yamamura Y."/>
            <person name="Yuan S."/>
            <person name="Shinozaki K."/>
            <person name="Davis R.W."/>
            <person name="Theologis A."/>
            <person name="Ecker J.R."/>
        </authorList>
    </citation>
    <scope>NUCLEOTIDE SEQUENCE [LARGE SCALE MRNA]</scope>
    <source>
        <strain>cv. Columbia</strain>
    </source>
</reference>
<reference key="5">
    <citation type="journal article" date="2004" name="Plant Physiol.">
        <title>A novel family of cys-rich membrane proteins mediates cadmium resistance in Arabidopsis.</title>
        <authorList>
            <person name="Song W.Y."/>
            <person name="Martinoia E."/>
            <person name="Lee J."/>
            <person name="Kim D."/>
            <person name="Kim D.Y."/>
            <person name="Vogt E."/>
            <person name="Shim D."/>
            <person name="Choi K.S."/>
            <person name="Hwang I."/>
            <person name="Lee Y."/>
        </authorList>
    </citation>
    <scope>FUNCTION</scope>
    <scope>MUTAGENESIS OF CYS-29; CYS-30; CYS-35; PRO-36 AND CYS-37</scope>
    <scope>TISSUE SPECIFICITY</scope>
    <scope>SUBCELLULAR LOCATION</scope>
    <scope>GENE FAMILY</scope>
    <scope>NOMENCLATURE</scope>
</reference>
<reference key="6">
    <citation type="journal article" date="2010" name="Plant Cell">
        <title>Cell Number Regulator1 affects plant and organ size in maize: implications for crop yield enhancement and heterosis.</title>
        <authorList>
            <person name="Guo M."/>
            <person name="Rupe M.A."/>
            <person name="Dieter J.A."/>
            <person name="Zou J."/>
            <person name="Spielbauer D."/>
            <person name="Duncan K.E."/>
            <person name="Howard R.J."/>
            <person name="Hou Z."/>
            <person name="Simmons C.R."/>
        </authorList>
    </citation>
    <scope>3D-STRUCTURE MODELING</scope>
</reference>
<reference key="7">
    <citation type="journal article" date="2010" name="Plant Cell">
        <title>Arabidopsis PCR2 is a zinc exporter involved in both zinc extrusion and long-distance zinc transport.</title>
        <authorList>
            <person name="Song W.Y."/>
            <person name="Choi K.S."/>
            <person name="Kim do Y."/>
            <person name="Geisler M."/>
            <person name="Park J."/>
            <person name="Vincenzetti V."/>
            <person name="Schellenberg M."/>
            <person name="Kim S.H."/>
            <person name="Lim Y.P."/>
            <person name="Noh E.W."/>
            <person name="Lee Y."/>
            <person name="Martinoia E."/>
        </authorList>
    </citation>
    <scope>FUNCTION</scope>
    <scope>TISSUE SPECIFICITY</scope>
    <scope>DISRUPTION PHENOTYPE</scope>
</reference>
<accession>Q9LQU2</accession>
<dbReference type="EMBL" id="AC006917">
    <property type="protein sequence ID" value="AAF79233.1"/>
    <property type="molecule type" value="Genomic_DNA"/>
</dbReference>
<dbReference type="EMBL" id="CP002684">
    <property type="protein sequence ID" value="AEE29238.1"/>
    <property type="molecule type" value="Genomic_DNA"/>
</dbReference>
<dbReference type="EMBL" id="AK118861">
    <property type="protein sequence ID" value="BAC43448.1"/>
    <property type="molecule type" value="mRNA"/>
</dbReference>
<dbReference type="EMBL" id="BT005663">
    <property type="protein sequence ID" value="AAO64083.1"/>
    <property type="molecule type" value="mRNA"/>
</dbReference>
<dbReference type="RefSeq" id="NP_172941.1">
    <property type="nucleotide sequence ID" value="NM_101357.4"/>
</dbReference>
<dbReference type="FunCoup" id="Q9LQU2">
    <property type="interactions" value="53"/>
</dbReference>
<dbReference type="STRING" id="3702.Q9LQU2"/>
<dbReference type="TCDB" id="1.A.87.3.7">
    <property type="family name" value="the mechanosensitive calcium channel (mca) family"/>
</dbReference>
<dbReference type="PaxDb" id="3702-AT1G14880.1"/>
<dbReference type="ProteomicsDB" id="236443"/>
<dbReference type="EnsemblPlants" id="AT1G14880.1">
    <property type="protein sequence ID" value="AT1G14880.1"/>
    <property type="gene ID" value="AT1G14880"/>
</dbReference>
<dbReference type="GeneID" id="838053"/>
<dbReference type="Gramene" id="AT1G14880.1">
    <property type="protein sequence ID" value="AT1G14880.1"/>
    <property type="gene ID" value="AT1G14880"/>
</dbReference>
<dbReference type="KEGG" id="ath:AT1G14880"/>
<dbReference type="Araport" id="AT1G14880"/>
<dbReference type="TAIR" id="AT1G14880">
    <property type="gene designation" value="PCR1"/>
</dbReference>
<dbReference type="eggNOG" id="ENOG502S7UD">
    <property type="taxonomic scope" value="Eukaryota"/>
</dbReference>
<dbReference type="HOGENOM" id="CLU_083147_1_0_1"/>
<dbReference type="InParanoid" id="Q9LQU2"/>
<dbReference type="OMA" id="TLMQHEK"/>
<dbReference type="OrthoDB" id="1045822at2759"/>
<dbReference type="PhylomeDB" id="Q9LQU2"/>
<dbReference type="PRO" id="PR:Q9LQU2"/>
<dbReference type="Proteomes" id="UP000006548">
    <property type="component" value="Chromosome 1"/>
</dbReference>
<dbReference type="ExpressionAtlas" id="Q9LQU2">
    <property type="expression patterns" value="baseline and differential"/>
</dbReference>
<dbReference type="GO" id="GO:0005576">
    <property type="term" value="C:extracellular region"/>
    <property type="evidence" value="ECO:0007005"/>
    <property type="project" value="TAIR"/>
</dbReference>
<dbReference type="GO" id="GO:0000325">
    <property type="term" value="C:plant-type vacuole"/>
    <property type="evidence" value="ECO:0007005"/>
    <property type="project" value="TAIR"/>
</dbReference>
<dbReference type="GO" id="GO:0005886">
    <property type="term" value="C:plasma membrane"/>
    <property type="evidence" value="ECO:0007669"/>
    <property type="project" value="UniProtKB-SubCell"/>
</dbReference>
<dbReference type="GO" id="GO:0003729">
    <property type="term" value="F:mRNA binding"/>
    <property type="evidence" value="ECO:0000314"/>
    <property type="project" value="TAIR"/>
</dbReference>
<dbReference type="InterPro" id="IPR006461">
    <property type="entry name" value="PLAC_motif_containing"/>
</dbReference>
<dbReference type="NCBIfam" id="TIGR01571">
    <property type="entry name" value="A_thal_Cys_rich"/>
    <property type="match status" value="1"/>
</dbReference>
<dbReference type="PANTHER" id="PTHR15907">
    <property type="entry name" value="DUF614 FAMILY PROTEIN-RELATED"/>
    <property type="match status" value="1"/>
</dbReference>
<dbReference type="Pfam" id="PF04749">
    <property type="entry name" value="PLAC8"/>
    <property type="match status" value="1"/>
</dbReference>
<protein>
    <recommendedName>
        <fullName>Protein PLANT CADMIUM RESISTANCE 1</fullName>
        <shortName>AtPCR1</shortName>
    </recommendedName>
</protein>
<comment type="function">
    <text evidence="3 4">Involved in glutathione-independent cadmium resistance. Reduces cadmium uptake rather than activating efflux, but is not closely coupled to calcium transporter.</text>
</comment>
<comment type="subunit">
    <text evidence="1">Homopentamer.</text>
</comment>
<comment type="subcellular location">
    <subcellularLocation>
        <location evidence="5">Cell membrane</location>
        <topology evidence="5">Multi-pass membrane protein</topology>
    </subcellularLocation>
</comment>
<comment type="tissue specificity">
    <text evidence="3 4">Expressed in aerial part, but not in roots. Detected in the guard and mesophyll cells.</text>
</comment>
<comment type="induction">
    <text>Up-regulated in shoots by cadmium.</text>
</comment>
<comment type="domain">
    <text>the N-terminal domain (1-84) is required for cadmium resistance.</text>
</comment>
<comment type="disruption phenotype">
    <text evidence="4">No heavy metal-related phenotype.</text>
</comment>
<comment type="similarity">
    <text evidence="5">Belongs to the cornifelin family.</text>
</comment>
<feature type="chain" id="PRO_0000407718" description="Protein PLANT CADMIUM RESISTANCE 1">
    <location>
        <begin position="1"/>
        <end position="151"/>
    </location>
</feature>
<feature type="transmembrane region" description="Helical" evidence="2">
    <location>
        <begin position="31"/>
        <end position="47"/>
    </location>
</feature>
<feature type="transmembrane region" description="Helical" evidence="2">
    <location>
        <begin position="54"/>
        <end position="71"/>
    </location>
</feature>
<feature type="mutagenesis site" description="No effect on cadmium resistance. Total loss of cadmium resistance in a heterologous system; when associated with A-30; A-35; A-36 and A-37." evidence="3">
    <original>C</original>
    <variation>A</variation>
    <location>
        <position position="29"/>
    </location>
</feature>
<feature type="mutagenesis site" description="No effect on cadmium resistance. Total loss of cadmium resistance in a heterologous system; when associated with A-29; A-35; A-36 and A-37." evidence="3">
    <original>C</original>
    <variation>A</variation>
    <location>
        <position position="30"/>
    </location>
</feature>
<feature type="mutagenesis site" description="No effect on cadmium resistance. Decreased cadmium resistance in a heterologous system; when associated with A-36 and A-37. Total loss of cadmium resistance in a heterologous system; when associated with A-29; A-30; A-36 and A-37." evidence="3">
    <original>C</original>
    <variation>A</variation>
    <location>
        <position position="35"/>
    </location>
</feature>
<feature type="mutagenesis site" description="No effect on cadmium resistance. Decreased cadmium resistance in a heterologous system; when associated with A-35 and A-37. Total loss of cadmium resistance in a heterologous system; when associated with A-29; A-30; A-35 and A-37." evidence="3">
    <original>P</original>
    <variation>A</variation>
    <location>
        <position position="36"/>
    </location>
</feature>
<feature type="mutagenesis site" description="No effect on cadmium resistance. Decreased cadmium resistance in a heterologous system; when associated with A-35 and A-36. Total loss of cadmium resistance in a heterologous system; when associated with A-29; A-30; A-35 and A-36." evidence="3">
    <original>C</original>
    <variation>A</variation>
    <location>
        <position position="37"/>
    </location>
</feature>
<evidence type="ECO:0000250" key="1"/>
<evidence type="ECO:0000255" key="2"/>
<evidence type="ECO:0000269" key="3">
    <source>
    </source>
</evidence>
<evidence type="ECO:0000269" key="4">
    <source>
    </source>
</evidence>
<evidence type="ECO:0000305" key="5"/>
<name>PCR1_ARATH</name>
<sequence>MEAQLHAKPHAQGEWSTGFCDCFSDCRNCCITLCCPCITFGQVAEIVDRGSKSCCAAGALYMLIDLITSCGRMYACFYSGKMRAQYNIKGDGCTDCLKHFCCNLCALTQQYRELKHRGFDMSLGWAGNAEKQQNQGGVAMGAPAFQGGMTR</sequence>
<keyword id="KW-1003">Cell membrane</keyword>
<keyword id="KW-0472">Membrane</keyword>
<keyword id="KW-1185">Reference proteome</keyword>
<keyword id="KW-0812">Transmembrane</keyword>
<keyword id="KW-1133">Transmembrane helix</keyword>
<gene>
    <name type="primary">PCR1</name>
    <name type="ordered locus">At1g14880</name>
    <name type="ORF">F10B6.29</name>
</gene>
<proteinExistence type="evidence at protein level"/>